<sequence>MIKFEKVNYTYQPNSPFASRALFDIDLEVKKGSYTALIGHTGSGKSTLLQHLNGLLQPTQGTVRVGDIVVTSTSKQKEIKPVRKKVGVVFQFPESQLFEETVLKDVAFGPQNFGISKEEAEKIAAEKLEMVGLSKEFWEKSPFELSGGQMRRVAIAGILAMEPEVLVLDEPTAGLDPKARIEMMKLFESIHQTGQTVVLVTHLMDDVADYADYVYLLEKGHIISCGTPSDVFQEVDFLKAHELGVPKATHFADQLQKTGVYTFEKLPITRAELVNLLTSLSVKSGGEN</sequence>
<dbReference type="EC" id="7.-.-.-" evidence="1"/>
<dbReference type="EMBL" id="AE005176">
    <property type="protein sequence ID" value="AAK04376.1"/>
    <property type="molecule type" value="Genomic_DNA"/>
</dbReference>
<dbReference type="PIR" id="F86659">
    <property type="entry name" value="F86659"/>
</dbReference>
<dbReference type="RefSeq" id="NP_266434.1">
    <property type="nucleotide sequence ID" value="NC_002662.1"/>
</dbReference>
<dbReference type="RefSeq" id="WP_004255782.1">
    <property type="nucleotide sequence ID" value="NC_002662.1"/>
</dbReference>
<dbReference type="SMR" id="Q9CIS8"/>
<dbReference type="PaxDb" id="272623-L76755"/>
<dbReference type="EnsemblBacteria" id="AAK04376">
    <property type="protein sequence ID" value="AAK04376"/>
    <property type="gene ID" value="L76755"/>
</dbReference>
<dbReference type="KEGG" id="lla:L76755"/>
<dbReference type="PATRIC" id="fig|272623.7.peg.304"/>
<dbReference type="eggNOG" id="COG1122">
    <property type="taxonomic scope" value="Bacteria"/>
</dbReference>
<dbReference type="HOGENOM" id="CLU_000604_1_22_9"/>
<dbReference type="OrthoDB" id="9784332at2"/>
<dbReference type="Proteomes" id="UP000002196">
    <property type="component" value="Chromosome"/>
</dbReference>
<dbReference type="GO" id="GO:0043190">
    <property type="term" value="C:ATP-binding cassette (ABC) transporter complex"/>
    <property type="evidence" value="ECO:0007669"/>
    <property type="project" value="TreeGrafter"/>
</dbReference>
<dbReference type="GO" id="GO:0005524">
    <property type="term" value="F:ATP binding"/>
    <property type="evidence" value="ECO:0007669"/>
    <property type="project" value="UniProtKB-KW"/>
</dbReference>
<dbReference type="GO" id="GO:0016887">
    <property type="term" value="F:ATP hydrolysis activity"/>
    <property type="evidence" value="ECO:0007669"/>
    <property type="project" value="InterPro"/>
</dbReference>
<dbReference type="GO" id="GO:0042626">
    <property type="term" value="F:ATPase-coupled transmembrane transporter activity"/>
    <property type="evidence" value="ECO:0007669"/>
    <property type="project" value="TreeGrafter"/>
</dbReference>
<dbReference type="CDD" id="cd03225">
    <property type="entry name" value="ABC_cobalt_CbiO_domain1"/>
    <property type="match status" value="1"/>
</dbReference>
<dbReference type="FunFam" id="3.40.50.300:FF:000224">
    <property type="entry name" value="Energy-coupling factor transporter ATP-binding protein EcfA"/>
    <property type="match status" value="1"/>
</dbReference>
<dbReference type="Gene3D" id="3.40.50.300">
    <property type="entry name" value="P-loop containing nucleotide triphosphate hydrolases"/>
    <property type="match status" value="1"/>
</dbReference>
<dbReference type="InterPro" id="IPR003593">
    <property type="entry name" value="AAA+_ATPase"/>
</dbReference>
<dbReference type="InterPro" id="IPR003439">
    <property type="entry name" value="ABC_transporter-like_ATP-bd"/>
</dbReference>
<dbReference type="InterPro" id="IPR017871">
    <property type="entry name" value="ABC_transporter-like_CS"/>
</dbReference>
<dbReference type="InterPro" id="IPR015856">
    <property type="entry name" value="ABC_transpr_CbiO/EcfA_su"/>
</dbReference>
<dbReference type="InterPro" id="IPR050095">
    <property type="entry name" value="ECF_ABC_transporter_ATP-bd"/>
</dbReference>
<dbReference type="InterPro" id="IPR030946">
    <property type="entry name" value="EcfA2"/>
</dbReference>
<dbReference type="InterPro" id="IPR027417">
    <property type="entry name" value="P-loop_NTPase"/>
</dbReference>
<dbReference type="NCBIfam" id="TIGR04521">
    <property type="entry name" value="ECF_ATPase_2"/>
    <property type="match status" value="1"/>
</dbReference>
<dbReference type="NCBIfam" id="NF010155">
    <property type="entry name" value="PRK13634.1"/>
    <property type="match status" value="1"/>
</dbReference>
<dbReference type="PANTHER" id="PTHR43553:SF27">
    <property type="entry name" value="ENERGY-COUPLING FACTOR TRANSPORTER ATP-BINDING PROTEIN ECFA2"/>
    <property type="match status" value="1"/>
</dbReference>
<dbReference type="PANTHER" id="PTHR43553">
    <property type="entry name" value="HEAVY METAL TRANSPORTER"/>
    <property type="match status" value="1"/>
</dbReference>
<dbReference type="Pfam" id="PF00005">
    <property type="entry name" value="ABC_tran"/>
    <property type="match status" value="1"/>
</dbReference>
<dbReference type="SMART" id="SM00382">
    <property type="entry name" value="AAA"/>
    <property type="match status" value="1"/>
</dbReference>
<dbReference type="SUPFAM" id="SSF52540">
    <property type="entry name" value="P-loop containing nucleoside triphosphate hydrolases"/>
    <property type="match status" value="1"/>
</dbReference>
<dbReference type="PROSITE" id="PS00211">
    <property type="entry name" value="ABC_TRANSPORTER_1"/>
    <property type="match status" value="1"/>
</dbReference>
<dbReference type="PROSITE" id="PS50893">
    <property type="entry name" value="ABC_TRANSPORTER_2"/>
    <property type="match status" value="1"/>
</dbReference>
<dbReference type="PROSITE" id="PS51246">
    <property type="entry name" value="CBIO"/>
    <property type="match status" value="1"/>
</dbReference>
<reference key="1">
    <citation type="journal article" date="2001" name="Genome Res.">
        <title>The complete genome sequence of the lactic acid bacterium Lactococcus lactis ssp. lactis IL1403.</title>
        <authorList>
            <person name="Bolotin A."/>
            <person name="Wincker P."/>
            <person name="Mauger S."/>
            <person name="Jaillon O."/>
            <person name="Malarme K."/>
            <person name="Weissenbach J."/>
            <person name="Ehrlich S.D."/>
            <person name="Sorokin A."/>
        </authorList>
    </citation>
    <scope>NUCLEOTIDE SEQUENCE [LARGE SCALE GENOMIC DNA]</scope>
    <source>
        <strain>IL1403</strain>
    </source>
</reference>
<name>ECFA2_LACLA</name>
<feature type="chain" id="PRO_0000092020" description="Energy-coupling factor transporter ATP-binding protein EcfA2">
    <location>
        <begin position="1"/>
        <end position="288"/>
    </location>
</feature>
<feature type="domain" description="ABC transporter" evidence="1">
    <location>
        <begin position="2"/>
        <end position="244"/>
    </location>
</feature>
<feature type="binding site" evidence="1">
    <location>
        <begin position="39"/>
        <end position="46"/>
    </location>
    <ligand>
        <name>ATP</name>
        <dbReference type="ChEBI" id="CHEBI:30616"/>
    </ligand>
</feature>
<proteinExistence type="inferred from homology"/>
<keyword id="KW-0067">ATP-binding</keyword>
<keyword id="KW-1003">Cell membrane</keyword>
<keyword id="KW-0472">Membrane</keyword>
<keyword id="KW-0547">Nucleotide-binding</keyword>
<keyword id="KW-1185">Reference proteome</keyword>
<keyword id="KW-1278">Translocase</keyword>
<keyword id="KW-0813">Transport</keyword>
<comment type="function">
    <text evidence="1">ATP-binding (A) component of a common energy-coupling factor (ECF) ABC-transporter complex. Unlike classic ABC transporters this ECF transporter provides the energy necessary to transport a number of different substrates.</text>
</comment>
<comment type="subunit">
    <text evidence="1">Forms a stable energy-coupling factor (ECF) transporter complex composed of 2 membrane-embedded substrate-binding proteins (S component), 2 ATP-binding proteins (A component) and 2 transmembrane proteins (T component).</text>
</comment>
<comment type="subcellular location">
    <subcellularLocation>
        <location evidence="1">Cell membrane</location>
        <topology evidence="1">Peripheral membrane protein</topology>
    </subcellularLocation>
</comment>
<comment type="similarity">
    <text evidence="1">Belongs to the ABC transporter superfamily. Energy-coupling factor EcfA family.</text>
</comment>
<protein>
    <recommendedName>
        <fullName evidence="1">Energy-coupling factor transporter ATP-binding protein EcfA2</fullName>
        <shortName evidence="1">ECF transporter A component EcfA2</shortName>
        <ecNumber evidence="1">7.-.-.-</ecNumber>
    </recommendedName>
</protein>
<evidence type="ECO:0000255" key="1">
    <source>
        <dbReference type="HAMAP-Rule" id="MF_01710"/>
    </source>
</evidence>
<gene>
    <name evidence="1" type="primary">ecfA2</name>
    <name type="synonym">cbiO2</name>
    <name type="ordered locus">LL0278</name>
    <name type="ORF">L76755</name>
</gene>
<organism>
    <name type="scientific">Lactococcus lactis subsp. lactis (strain IL1403)</name>
    <name type="common">Streptococcus lactis</name>
    <dbReference type="NCBI Taxonomy" id="272623"/>
    <lineage>
        <taxon>Bacteria</taxon>
        <taxon>Bacillati</taxon>
        <taxon>Bacillota</taxon>
        <taxon>Bacilli</taxon>
        <taxon>Lactobacillales</taxon>
        <taxon>Streptococcaceae</taxon>
        <taxon>Lactococcus</taxon>
    </lineage>
</organism>
<accession>Q9CIS8</accession>